<evidence type="ECO:0000269" key="1">
    <source>
    </source>
</evidence>
<feature type="peptide" id="PRO_0000010193" description="Citropin-1.2">
    <location>
        <begin position="1"/>
        <end position="16"/>
    </location>
</feature>
<feature type="peptide" id="PRO_0000010194" description="Citropin-1.2.3">
    <location>
        <begin position="1"/>
        <end position="11"/>
    </location>
</feature>
<feature type="peptide" id="PRO_0000010195" description="Citropin-1.2.1">
    <location>
        <begin position="3"/>
        <end position="14"/>
    </location>
</feature>
<feature type="peptide" id="PRO_0000010196" description="Citropin-1.2.2">
    <location>
        <begin position="4"/>
        <end position="14"/>
    </location>
</feature>
<feature type="modified residue" description="Leucine amide" evidence="1">
    <location>
        <position position="16"/>
    </location>
</feature>
<comment type="function">
    <text>Bacteriostatic action for Gram-positive bacteria.</text>
</comment>
<comment type="subcellular location">
    <subcellularLocation>
        <location>Secreted</location>
    </subcellularLocation>
</comment>
<comment type="tissue specificity">
    <text>Expressed by the dorsal and submental skin glands.</text>
</comment>
<protein>
    <recommendedName>
        <fullName>Citropin-1.2</fullName>
    </recommendedName>
    <component>
        <recommendedName>
            <fullName>Citropin-1.2.1</fullName>
        </recommendedName>
    </component>
    <component>
        <recommendedName>
            <fullName>Citropin-1.2.2</fullName>
        </recommendedName>
    </component>
    <component>
        <recommendedName>
            <fullName>Citropin-1.2.3</fullName>
        </recommendedName>
    </component>
</protein>
<reference key="1">
    <citation type="journal article" date="1999" name="Eur. J. Biochem.">
        <title>Host defence peptides from the skin glands of the Australian blue mountains tree-frog Litoria citropa. Solution structure of the antibacterial peptide citropin 1.1.</title>
        <authorList>
            <person name="Wegener K.L."/>
            <person name="Wabnitz P.A."/>
            <person name="Carver J.A."/>
            <person name="Bowie J.H."/>
            <person name="Chia B.C.S."/>
            <person name="Wallace J.C."/>
            <person name="Tyler M.J."/>
        </authorList>
    </citation>
    <scope>PROTEIN SEQUENCE</scope>
    <scope>AMIDATION AT LEU-16</scope>
    <source>
        <tissue>Skin secretion</tissue>
    </source>
</reference>
<accession>P81840</accession>
<accession>P81841</accession>
<accession>P81842</accession>
<accession>P81843</accession>
<proteinExistence type="evidence at protein level"/>
<name>CT12_RANCI</name>
<keyword id="KW-0027">Amidation</keyword>
<keyword id="KW-0878">Amphibian defense peptide</keyword>
<keyword id="KW-0044">Antibiotic</keyword>
<keyword id="KW-0929">Antimicrobial</keyword>
<keyword id="KW-0903">Direct protein sequencing</keyword>
<keyword id="KW-0964">Secreted</keyword>
<organism>
    <name type="scientific">Ranoidea citropa</name>
    <name type="common">Australian Blue Mountains tree frog</name>
    <name type="synonym">Litoria citropa</name>
    <dbReference type="NCBI Taxonomy" id="94770"/>
    <lineage>
        <taxon>Eukaryota</taxon>
        <taxon>Metazoa</taxon>
        <taxon>Chordata</taxon>
        <taxon>Craniata</taxon>
        <taxon>Vertebrata</taxon>
        <taxon>Euteleostomi</taxon>
        <taxon>Amphibia</taxon>
        <taxon>Batrachia</taxon>
        <taxon>Anura</taxon>
        <taxon>Neobatrachia</taxon>
        <taxon>Hyloidea</taxon>
        <taxon>Hylidae</taxon>
        <taxon>Pelodryadinae</taxon>
        <taxon>Ranoidea</taxon>
    </lineage>
</organism>
<dbReference type="TCDB" id="1.C.76.1.4">
    <property type="family name" value="the pore-forming maculatin peptide (maculatin) family"/>
</dbReference>
<dbReference type="GO" id="GO:0005576">
    <property type="term" value="C:extracellular region"/>
    <property type="evidence" value="ECO:0007669"/>
    <property type="project" value="UniProtKB-SubCell"/>
</dbReference>
<dbReference type="GO" id="GO:0042742">
    <property type="term" value="P:defense response to bacterium"/>
    <property type="evidence" value="ECO:0007669"/>
    <property type="project" value="UniProtKB-KW"/>
</dbReference>
<dbReference type="InterPro" id="IPR013157">
    <property type="entry name" value="Aurein_antimicrobial_peptide"/>
</dbReference>
<dbReference type="Pfam" id="PF08256">
    <property type="entry name" value="Antimicrobial20"/>
    <property type="match status" value="1"/>
</dbReference>
<sequence length="16" mass="1616">GLFDIIKKVASVVGGL</sequence>